<keyword id="KW-0002">3D-structure</keyword>
<keyword id="KW-0104">Cadmium</keyword>
<keyword id="KW-1015">Disulfide bond</keyword>
<keyword id="KW-0479">Metal-binding</keyword>
<keyword id="KW-1185">Reference proteome</keyword>
<keyword id="KW-0964">Secreted</keyword>
<keyword id="KW-0732">Signal</keyword>
<accession>Q6K209</accession>
<feature type="signal peptide" evidence="2">
    <location>
        <begin position="1"/>
        <end position="31"/>
    </location>
</feature>
<feature type="chain" id="PRO_5013533355" description="Defensin-like protein CAL1">
    <location>
        <begin position="32"/>
        <end position="80"/>
    </location>
</feature>
<feature type="disulfide bond" evidence="1">
    <location>
        <begin position="34"/>
        <end position="80"/>
    </location>
</feature>
<feature type="disulfide bond" evidence="1">
    <location>
        <begin position="45"/>
        <end position="65"/>
    </location>
</feature>
<feature type="disulfide bond" evidence="1">
    <location>
        <begin position="51"/>
        <end position="74"/>
    </location>
</feature>
<feature type="disulfide bond" evidence="1">
    <location>
        <begin position="55"/>
        <end position="76"/>
    </location>
</feature>
<feature type="mutagenesis site" description="No effect on the ability to bind cadmium." evidence="4">
    <original>C</original>
    <variation>A</variation>
    <location>
        <position position="34"/>
    </location>
</feature>
<feature type="mutagenesis site" description="No effect on the ability to bind cadmium." evidence="4">
    <original>C</original>
    <variation>A</variation>
    <location>
        <position position="45"/>
    </location>
</feature>
<feature type="mutagenesis site" description="No effect on the ability to bind cadmium." evidence="4">
    <original>C</original>
    <variation>A</variation>
    <location>
        <position position="51"/>
    </location>
</feature>
<feature type="mutagenesis site" description="Decreases the ability to bind cadmium." evidence="4">
    <original>C</original>
    <variation>A</variation>
    <location>
        <position position="55"/>
    </location>
</feature>
<feature type="mutagenesis site" description="Decreases the ability to bind cadmium." evidence="4">
    <original>C</original>
    <variation>A</variation>
    <location>
        <position position="65"/>
    </location>
</feature>
<feature type="mutagenesis site" description="Decreases the ability to bind cadmium; No effect on the localization to the extracellular space." evidence="4">
    <original>L</original>
    <variation>V</variation>
    <location>
        <position position="70"/>
    </location>
</feature>
<feature type="mutagenesis site" description="Decreases the ability to bind cadmium." evidence="4">
    <original>C</original>
    <variation>A</variation>
    <location>
        <position position="74"/>
    </location>
</feature>
<feature type="mutagenesis site" description="No effect on the ability to bind cadmium." evidence="4">
    <original>C</original>
    <variation>A</variation>
    <location>
        <position position="76"/>
    </location>
</feature>
<feature type="mutagenesis site" description="No effect on the ability to bind cadmium." evidence="4">
    <original>C</original>
    <variation>A</variation>
    <location>
        <position position="80"/>
    </location>
</feature>
<feature type="strand" evidence="11">
    <location>
        <begin position="33"/>
        <end position="37"/>
    </location>
</feature>
<feature type="helix" evidence="11">
    <location>
        <begin position="48"/>
        <end position="57"/>
    </location>
</feature>
<feature type="strand" evidence="11">
    <location>
        <begin position="61"/>
        <end position="68"/>
    </location>
</feature>
<feature type="strand" evidence="11">
    <location>
        <begin position="71"/>
        <end position="79"/>
    </location>
</feature>
<gene>
    <name evidence="6" type="primary">CAL1</name>
    <name evidence="5" type="synonym">CPT1</name>
    <name evidence="7" type="synonym">PR12</name>
    <name evidence="9" type="ordered locus">Os02g0629800</name>
    <name evidence="7" type="ordered locus">LOC_Os02g41904</name>
    <name evidence="8" type="ORF">B1469H02.30</name>
    <name evidence="10" type="ORF">OsJ_07607</name>
</gene>
<sequence>MAPSRRMVASAFLLLAILVATEMGTTKVAEARHCLSQSHRFKGMCVSSNNCANVCRTESFPDGECKSHGLERKCFCKKVC</sequence>
<evidence type="ECO:0000250" key="1">
    <source>
        <dbReference type="UniProtKB" id="P69241"/>
    </source>
</evidence>
<evidence type="ECO:0000255" key="2"/>
<evidence type="ECO:0000269" key="3">
    <source>
    </source>
</evidence>
<evidence type="ECO:0000269" key="4">
    <source>
    </source>
</evidence>
<evidence type="ECO:0000303" key="5">
    <source>
    </source>
</evidence>
<evidence type="ECO:0000303" key="6">
    <source>
    </source>
</evidence>
<evidence type="ECO:0000305" key="7"/>
<evidence type="ECO:0000312" key="8">
    <source>
        <dbReference type="EMBL" id="BAD23741.1"/>
    </source>
</evidence>
<evidence type="ECO:0000312" key="9">
    <source>
        <dbReference type="EMBL" id="BAF09407.1"/>
    </source>
</evidence>
<evidence type="ECO:0000312" key="10">
    <source>
        <dbReference type="EMBL" id="EEE57415.1"/>
    </source>
</evidence>
<evidence type="ECO:0007829" key="11">
    <source>
        <dbReference type="PDB" id="6LCQ"/>
    </source>
</evidence>
<name>CAL1_ORYSJ</name>
<proteinExistence type="evidence at protein level"/>
<comment type="function">
    <text evidence="4">Plant defensin-like protein involved in accumulation of cadmium (Cd) in rice leaves. Mediates Cd efflux from cytosol into extracellular spaces via chelation. This drives Cd secretion from xylem parenchyma cells into the xylem vessels, hence lowering Cd levels in cytosol meanwhile promoting Cd translocation from roots to shoots.</text>
</comment>
<comment type="subcellular location">
    <subcellularLocation>
        <location evidence="4">Secreted</location>
        <location evidence="4">Extracellular space</location>
    </subcellularLocation>
</comment>
<comment type="tissue specificity">
    <text evidence="4">Expressed preferentially in root exodermis and xylem parenchyma cells in vasculature of root and flag leaf sheath.</text>
</comment>
<comment type="induction">
    <text evidence="3 4">Induced by cadmium in roots (PubMed:29440679). Down-regulated by cold stress (PubMed:19279197).</text>
</comment>
<comment type="biotechnology">
    <text evidence="4">Rice varieties with high CAL1 activity over-accumulate cadmium (Cd) in rice straws, but are not affected by Cd accumulation, or the accumulation of other essential metals in rice grains. These functional characteristics could be used to breed dual-function rice varieties that produce safe grains while remediating paddy soils.</text>
</comment>
<comment type="similarity">
    <text evidence="7">Belongs to the DEFL family.</text>
</comment>
<dbReference type="EMBL" id="AP006168">
    <property type="protein sequence ID" value="BAD23741.1"/>
    <property type="molecule type" value="Genomic_DNA"/>
</dbReference>
<dbReference type="EMBL" id="AP008208">
    <property type="protein sequence ID" value="BAF09407.1"/>
    <property type="molecule type" value="Genomic_DNA"/>
</dbReference>
<dbReference type="EMBL" id="AP014958">
    <property type="protein sequence ID" value="BAS79891.1"/>
    <property type="molecule type" value="Genomic_DNA"/>
</dbReference>
<dbReference type="EMBL" id="CM000139">
    <property type="protein sequence ID" value="EEE57415.1"/>
    <property type="molecule type" value="Genomic_DNA"/>
</dbReference>
<dbReference type="PDB" id="6LCQ">
    <property type="method" value="X-ray"/>
    <property type="resolution" value="1.62 A"/>
    <property type="chains" value="A/B=32-80"/>
</dbReference>
<dbReference type="PDBsum" id="6LCQ"/>
<dbReference type="SMR" id="Q6K209"/>
<dbReference type="FunCoup" id="Q6K209">
    <property type="interactions" value="4"/>
</dbReference>
<dbReference type="STRING" id="39947.Q6K209"/>
<dbReference type="PaxDb" id="39947-Q6K209"/>
<dbReference type="EnsemblPlants" id="Os02t0629800-01">
    <property type="protein sequence ID" value="Os02t0629800-01"/>
    <property type="gene ID" value="Os02g0629800"/>
</dbReference>
<dbReference type="Gramene" id="Os02t0629800-01">
    <property type="protein sequence ID" value="Os02t0629800-01"/>
    <property type="gene ID" value="Os02g0629800"/>
</dbReference>
<dbReference type="KEGG" id="dosa:Os02g0629800"/>
<dbReference type="KEGG" id="osa:4330051"/>
<dbReference type="eggNOG" id="ENOG502STQ5">
    <property type="taxonomic scope" value="Eukaryota"/>
</dbReference>
<dbReference type="HOGENOM" id="CLU_161668_1_1_1"/>
<dbReference type="InParanoid" id="Q6K209"/>
<dbReference type="OMA" id="CFCKKIC"/>
<dbReference type="OrthoDB" id="1480833at2759"/>
<dbReference type="PlantReactome" id="R-OSA-6787011">
    <property type="pathway name" value="Jasmonic acid signaling"/>
</dbReference>
<dbReference type="Proteomes" id="UP000000763">
    <property type="component" value="Chromosome 2"/>
</dbReference>
<dbReference type="Proteomes" id="UP000007752">
    <property type="component" value="Chromosome 2"/>
</dbReference>
<dbReference type="Proteomes" id="UP000059680">
    <property type="component" value="Chromosome 2"/>
</dbReference>
<dbReference type="GO" id="GO:0005615">
    <property type="term" value="C:extracellular space"/>
    <property type="evidence" value="ECO:0000314"/>
    <property type="project" value="UniProtKB"/>
</dbReference>
<dbReference type="GO" id="GO:0046872">
    <property type="term" value="F:metal ion binding"/>
    <property type="evidence" value="ECO:0007669"/>
    <property type="project" value="UniProtKB-KW"/>
</dbReference>
<dbReference type="GO" id="GO:0140487">
    <property type="term" value="F:metal ion sequestering activity"/>
    <property type="evidence" value="ECO:0000314"/>
    <property type="project" value="UniProtKB"/>
</dbReference>
<dbReference type="GO" id="GO:0098849">
    <property type="term" value="P:cellular detoxification of cadmium ion"/>
    <property type="evidence" value="ECO:0000315"/>
    <property type="project" value="UniProtKB"/>
</dbReference>
<dbReference type="GO" id="GO:0006952">
    <property type="term" value="P:defense response"/>
    <property type="evidence" value="ECO:0007669"/>
    <property type="project" value="InterPro"/>
</dbReference>
<dbReference type="FunFam" id="3.30.30.10:FF:000004">
    <property type="entry name" value="Defensin-like protein CAL1"/>
    <property type="match status" value="1"/>
</dbReference>
<dbReference type="Gene3D" id="3.30.30.10">
    <property type="entry name" value="Knottin, scorpion toxin-like"/>
    <property type="match status" value="1"/>
</dbReference>
<dbReference type="InterPro" id="IPR008176">
    <property type="entry name" value="Defensin_plant"/>
</dbReference>
<dbReference type="InterPro" id="IPR003614">
    <property type="entry name" value="Scorpion_toxin-like"/>
</dbReference>
<dbReference type="InterPro" id="IPR036574">
    <property type="entry name" value="Scorpion_toxin-like_sf"/>
</dbReference>
<dbReference type="PANTHER" id="PTHR33147">
    <property type="entry name" value="DEFENSIN-LIKE PROTEIN 1"/>
    <property type="match status" value="1"/>
</dbReference>
<dbReference type="PANTHER" id="PTHR33147:SF8">
    <property type="entry name" value="DEFENSIN-LIKE PROTEIN CAL1"/>
    <property type="match status" value="1"/>
</dbReference>
<dbReference type="Pfam" id="PF00304">
    <property type="entry name" value="Gamma-thionin"/>
    <property type="match status" value="1"/>
</dbReference>
<dbReference type="PRINTS" id="PR00288">
    <property type="entry name" value="PUROTHIONIN"/>
</dbReference>
<dbReference type="SMART" id="SM00505">
    <property type="entry name" value="Knot1"/>
    <property type="match status" value="1"/>
</dbReference>
<dbReference type="SUPFAM" id="SSF57095">
    <property type="entry name" value="Scorpion toxin-like"/>
    <property type="match status" value="1"/>
</dbReference>
<dbReference type="PROSITE" id="PS00940">
    <property type="entry name" value="GAMMA_THIONIN"/>
    <property type="match status" value="1"/>
</dbReference>
<reference key="1">
    <citation type="journal article" date="2005" name="Nature">
        <title>The map-based sequence of the rice genome.</title>
        <authorList>
            <consortium name="International rice genome sequencing project (IRGSP)"/>
        </authorList>
    </citation>
    <scope>NUCLEOTIDE SEQUENCE [LARGE SCALE GENOMIC DNA]</scope>
    <source>
        <strain>cv. Nipponbare</strain>
    </source>
</reference>
<reference key="2">
    <citation type="journal article" date="2008" name="Nucleic Acids Res.">
        <title>The rice annotation project database (RAP-DB): 2008 update.</title>
        <authorList>
            <consortium name="The rice annotation project (RAP)"/>
        </authorList>
    </citation>
    <scope>GENOME REANNOTATION</scope>
    <source>
        <strain>cv. Nipponbare</strain>
    </source>
</reference>
<reference key="3">
    <citation type="journal article" date="2013" name="Rice">
        <title>Improvement of the Oryza sativa Nipponbare reference genome using next generation sequence and optical map data.</title>
        <authorList>
            <person name="Kawahara Y."/>
            <person name="de la Bastide M."/>
            <person name="Hamilton J.P."/>
            <person name="Kanamori H."/>
            <person name="McCombie W.R."/>
            <person name="Ouyang S."/>
            <person name="Schwartz D.C."/>
            <person name="Tanaka T."/>
            <person name="Wu J."/>
            <person name="Zhou S."/>
            <person name="Childs K.L."/>
            <person name="Davidson R.M."/>
            <person name="Lin H."/>
            <person name="Quesada-Ocampo L."/>
            <person name="Vaillancourt B."/>
            <person name="Sakai H."/>
            <person name="Lee S.S."/>
            <person name="Kim J."/>
            <person name="Numa H."/>
            <person name="Itoh T."/>
            <person name="Buell C.R."/>
            <person name="Matsumoto T."/>
        </authorList>
    </citation>
    <scope>GENOME REANNOTATION</scope>
    <source>
        <strain>cv. Nipponbare</strain>
    </source>
</reference>
<reference key="4">
    <citation type="journal article" date="2005" name="PLoS Biol.">
        <title>The genomes of Oryza sativa: a history of duplications.</title>
        <authorList>
            <person name="Yu J."/>
            <person name="Wang J."/>
            <person name="Lin W."/>
            <person name="Li S."/>
            <person name="Li H."/>
            <person name="Zhou J."/>
            <person name="Ni P."/>
            <person name="Dong W."/>
            <person name="Hu S."/>
            <person name="Zeng C."/>
            <person name="Zhang J."/>
            <person name="Zhang Y."/>
            <person name="Li R."/>
            <person name="Xu Z."/>
            <person name="Li S."/>
            <person name="Li X."/>
            <person name="Zheng H."/>
            <person name="Cong L."/>
            <person name="Lin L."/>
            <person name="Yin J."/>
            <person name="Geng J."/>
            <person name="Li G."/>
            <person name="Shi J."/>
            <person name="Liu J."/>
            <person name="Lv H."/>
            <person name="Li J."/>
            <person name="Wang J."/>
            <person name="Deng Y."/>
            <person name="Ran L."/>
            <person name="Shi X."/>
            <person name="Wang X."/>
            <person name="Wu Q."/>
            <person name="Li C."/>
            <person name="Ren X."/>
            <person name="Wang J."/>
            <person name="Wang X."/>
            <person name="Li D."/>
            <person name="Liu D."/>
            <person name="Zhang X."/>
            <person name="Ji Z."/>
            <person name="Zhao W."/>
            <person name="Sun Y."/>
            <person name="Zhang Z."/>
            <person name="Bao J."/>
            <person name="Han Y."/>
            <person name="Dong L."/>
            <person name="Ji J."/>
            <person name="Chen P."/>
            <person name="Wu S."/>
            <person name="Liu J."/>
            <person name="Xiao Y."/>
            <person name="Bu D."/>
            <person name="Tan J."/>
            <person name="Yang L."/>
            <person name="Ye C."/>
            <person name="Zhang J."/>
            <person name="Xu J."/>
            <person name="Zhou Y."/>
            <person name="Yu Y."/>
            <person name="Zhang B."/>
            <person name="Zhuang S."/>
            <person name="Wei H."/>
            <person name="Liu B."/>
            <person name="Lei M."/>
            <person name="Yu H."/>
            <person name="Li Y."/>
            <person name="Xu H."/>
            <person name="Wei S."/>
            <person name="He X."/>
            <person name="Fang L."/>
            <person name="Zhang Z."/>
            <person name="Zhang Y."/>
            <person name="Huang X."/>
            <person name="Su Z."/>
            <person name="Tong W."/>
            <person name="Li J."/>
            <person name="Tong Z."/>
            <person name="Li S."/>
            <person name="Ye J."/>
            <person name="Wang L."/>
            <person name="Fang L."/>
            <person name="Lei T."/>
            <person name="Chen C.-S."/>
            <person name="Chen H.-C."/>
            <person name="Xu Z."/>
            <person name="Li H."/>
            <person name="Huang H."/>
            <person name="Zhang F."/>
            <person name="Xu H."/>
            <person name="Li N."/>
            <person name="Zhao C."/>
            <person name="Li S."/>
            <person name="Dong L."/>
            <person name="Huang Y."/>
            <person name="Li L."/>
            <person name="Xi Y."/>
            <person name="Qi Q."/>
            <person name="Li W."/>
            <person name="Zhang B."/>
            <person name="Hu W."/>
            <person name="Zhang Y."/>
            <person name="Tian X."/>
            <person name="Jiao Y."/>
            <person name="Liang X."/>
            <person name="Jin J."/>
            <person name="Gao L."/>
            <person name="Zheng W."/>
            <person name="Hao B."/>
            <person name="Liu S.-M."/>
            <person name="Wang W."/>
            <person name="Yuan L."/>
            <person name="Cao M."/>
            <person name="McDermott J."/>
            <person name="Samudrala R."/>
            <person name="Wang J."/>
            <person name="Wong G.K.-S."/>
            <person name="Yang H."/>
        </authorList>
    </citation>
    <scope>NUCLEOTIDE SEQUENCE [LARGE SCALE GENOMIC DNA]</scope>
    <source>
        <strain>cv. Nipponbare</strain>
    </source>
</reference>
<reference key="5">
    <citation type="journal article" date="2009" name="Plant Physiol.">
        <title>Enhanced tolerance to chilling stress in OsMYB3R-2 transgenic rice is mediated by alteration in cell cycle and ectopic expression of stress genes.</title>
        <authorList>
            <person name="Ma Q."/>
            <person name="Dai X."/>
            <person name="Xu Y."/>
            <person name="Guo J."/>
            <person name="Liu Y."/>
            <person name="Chen N."/>
            <person name="Xiao J."/>
            <person name="Zhang D."/>
            <person name="Xu Z."/>
            <person name="Zhang X."/>
            <person name="Chong K."/>
        </authorList>
    </citation>
    <scope>INDUCTION</scope>
</reference>
<reference key="6">
    <citation type="journal article" date="2018" name="Nat. Commun.">
        <title>A defensin-like protein drives cadmium efflux and allocation in rice.</title>
        <authorList>
            <person name="Luo J.S."/>
            <person name="Huang J."/>
            <person name="Zeng D.L."/>
            <person name="Peng J.S."/>
            <person name="Zhang G.B."/>
            <person name="Ma H.L."/>
            <person name="Guan Y."/>
            <person name="Yi H.Y."/>
            <person name="Fu Y.L."/>
            <person name="Han B."/>
            <person name="Lin H.X."/>
            <person name="Qian Q."/>
            <person name="Gong J.M."/>
        </authorList>
    </citation>
    <scope>FUNCTION</scope>
    <scope>SUBCELLULAR LOCATION</scope>
    <scope>TISSUE SPECIFICITY</scope>
    <scope>INDUCTION BY CADMIUM</scope>
    <scope>BIOTECHNOLOGY</scope>
    <scope>MUTAGENESIS OF CYS-34; CYS-45; CYS-51; CYS-55; CYS-65; LEU-70; CYS-74; CYS-76 AND CYS-80</scope>
</reference>
<organism>
    <name type="scientific">Oryza sativa subsp. japonica</name>
    <name type="common">Rice</name>
    <dbReference type="NCBI Taxonomy" id="39947"/>
    <lineage>
        <taxon>Eukaryota</taxon>
        <taxon>Viridiplantae</taxon>
        <taxon>Streptophyta</taxon>
        <taxon>Embryophyta</taxon>
        <taxon>Tracheophyta</taxon>
        <taxon>Spermatophyta</taxon>
        <taxon>Magnoliopsida</taxon>
        <taxon>Liliopsida</taxon>
        <taxon>Poales</taxon>
        <taxon>Poaceae</taxon>
        <taxon>BOP clade</taxon>
        <taxon>Oryzoideae</taxon>
        <taxon>Oryzeae</taxon>
        <taxon>Oryzinae</taxon>
        <taxon>Oryza</taxon>
        <taxon>Oryza sativa</taxon>
    </lineage>
</organism>
<protein>
    <recommendedName>
        <fullName evidence="7">Defensin-like protein CAL1</fullName>
    </recommendedName>
    <alternativeName>
        <fullName evidence="5">OsCPT1</fullName>
    </alternativeName>
    <alternativeName>
        <fullName evidence="7">Pathogen-related protein 12</fullName>
        <shortName evidence="7">OsPR12</shortName>
    </alternativeName>
    <alternativeName>
        <fullName evidence="6">Protein CADMIUM ACCUMULATION IN LEAF 1</fullName>
    </alternativeName>
</protein>